<evidence type="ECO:0000255" key="1">
    <source>
        <dbReference type="HAMAP-Rule" id="MF_01825"/>
    </source>
</evidence>
<comment type="function">
    <text evidence="1">Catalyzes the oxidation of erythronate-4-phosphate to 3-hydroxy-2-oxo-4-phosphonooxybutanoate.</text>
</comment>
<comment type="catalytic activity">
    <reaction evidence="1">
        <text>4-phospho-D-erythronate + NAD(+) = (R)-3-hydroxy-2-oxo-4-phosphooxybutanoate + NADH + H(+)</text>
        <dbReference type="Rhea" id="RHEA:18829"/>
        <dbReference type="ChEBI" id="CHEBI:15378"/>
        <dbReference type="ChEBI" id="CHEBI:57540"/>
        <dbReference type="ChEBI" id="CHEBI:57945"/>
        <dbReference type="ChEBI" id="CHEBI:58538"/>
        <dbReference type="ChEBI" id="CHEBI:58766"/>
        <dbReference type="EC" id="1.1.1.290"/>
    </reaction>
</comment>
<comment type="pathway">
    <text evidence="1">Cofactor biosynthesis; pyridoxine 5'-phosphate biosynthesis; pyridoxine 5'-phosphate from D-erythrose 4-phosphate: step 2/5.</text>
</comment>
<comment type="subunit">
    <text evidence="1">Homodimer.</text>
</comment>
<comment type="subcellular location">
    <subcellularLocation>
        <location evidence="1">Cytoplasm</location>
    </subcellularLocation>
</comment>
<comment type="similarity">
    <text evidence="1">Belongs to the D-isomer specific 2-hydroxyacid dehydrogenase family. PdxB subfamily.</text>
</comment>
<proteinExistence type="inferred from homology"/>
<sequence length="380" mass="41573">MRIVADENIPLLDAFFAGFGEIRRLPGRSIDRAAVADADVLLVRSVTPVTREMLEGSPVRFVGTCTIGTDHLDLAYFQDAAIQWSSAPGCNARGVVDYVLGSLLTLAEIEGVDLRQRTYGVVGAGQVGGRLIAVLKALGWKVLVCDPPRQSAEGGDFVSLDEILQRCDVISLHTPLDKSGQSPTWHLLDEARLRQLRQGAWLINASRGAVVDNRALHDVMLEREDLQAVLDVWEGEPQVNVALADLCVIGTPHIAGYSLDGRQRGTAQIYQALCTFLDQPAAISLADLLPTPWLAQVSLDAATDPQWALNMLCRGVYDPRRDDADFRRSLTGDTASQRLAFDALRKHYPPRREIEGLKVHLEGESDTLTQLIRALGAVRV</sequence>
<reference key="1">
    <citation type="journal article" date="2003" name="Proc. Natl. Acad. Sci. U.S.A.">
        <title>The complete genome sequence of the Arabidopsis and tomato pathogen Pseudomonas syringae pv. tomato DC3000.</title>
        <authorList>
            <person name="Buell C.R."/>
            <person name="Joardar V."/>
            <person name="Lindeberg M."/>
            <person name="Selengut J."/>
            <person name="Paulsen I.T."/>
            <person name="Gwinn M.L."/>
            <person name="Dodson R.J."/>
            <person name="DeBoy R.T."/>
            <person name="Durkin A.S."/>
            <person name="Kolonay J.F."/>
            <person name="Madupu R."/>
            <person name="Daugherty S.C."/>
            <person name="Brinkac L.M."/>
            <person name="Beanan M.J."/>
            <person name="Haft D.H."/>
            <person name="Nelson W.C."/>
            <person name="Davidsen T.M."/>
            <person name="Zafar N."/>
            <person name="Zhou L."/>
            <person name="Liu J."/>
            <person name="Yuan Q."/>
            <person name="Khouri H.M."/>
            <person name="Fedorova N.B."/>
            <person name="Tran B."/>
            <person name="Russell D."/>
            <person name="Berry K.J."/>
            <person name="Utterback T.R."/>
            <person name="Van Aken S.E."/>
            <person name="Feldblyum T.V."/>
            <person name="D'Ascenzo M."/>
            <person name="Deng W.-L."/>
            <person name="Ramos A.R."/>
            <person name="Alfano J.R."/>
            <person name="Cartinhour S."/>
            <person name="Chatterjee A.K."/>
            <person name="Delaney T.P."/>
            <person name="Lazarowitz S.G."/>
            <person name="Martin G.B."/>
            <person name="Schneider D.J."/>
            <person name="Tang X."/>
            <person name="Bender C.L."/>
            <person name="White O."/>
            <person name="Fraser C.M."/>
            <person name="Collmer A."/>
        </authorList>
    </citation>
    <scope>NUCLEOTIDE SEQUENCE [LARGE SCALE GENOMIC DNA]</scope>
    <source>
        <strain>ATCC BAA-871 / DC3000</strain>
    </source>
</reference>
<gene>
    <name evidence="1" type="primary">pdxB</name>
    <name type="ordered locus">PSPTO_2019</name>
</gene>
<accession>Q884R9</accession>
<protein>
    <recommendedName>
        <fullName evidence="1">Erythronate-4-phosphate dehydrogenase</fullName>
        <ecNumber evidence="1">1.1.1.290</ecNumber>
    </recommendedName>
</protein>
<organism>
    <name type="scientific">Pseudomonas syringae pv. tomato (strain ATCC BAA-871 / DC3000)</name>
    <dbReference type="NCBI Taxonomy" id="223283"/>
    <lineage>
        <taxon>Bacteria</taxon>
        <taxon>Pseudomonadati</taxon>
        <taxon>Pseudomonadota</taxon>
        <taxon>Gammaproteobacteria</taxon>
        <taxon>Pseudomonadales</taxon>
        <taxon>Pseudomonadaceae</taxon>
        <taxon>Pseudomonas</taxon>
    </lineage>
</organism>
<feature type="chain" id="PRO_0000075984" description="Erythronate-4-phosphate dehydrogenase">
    <location>
        <begin position="1"/>
        <end position="380"/>
    </location>
</feature>
<feature type="active site" evidence="1">
    <location>
        <position position="207"/>
    </location>
</feature>
<feature type="active site" evidence="1">
    <location>
        <position position="236"/>
    </location>
</feature>
<feature type="active site" description="Proton donor" evidence="1">
    <location>
        <position position="253"/>
    </location>
</feature>
<feature type="binding site" evidence="1">
    <location>
        <position position="45"/>
    </location>
    <ligand>
        <name>substrate</name>
    </ligand>
</feature>
<feature type="binding site" evidence="1">
    <location>
        <position position="66"/>
    </location>
    <ligand>
        <name>substrate</name>
    </ligand>
</feature>
<feature type="binding site" evidence="1">
    <location>
        <begin position="126"/>
        <end position="127"/>
    </location>
    <ligand>
        <name>NAD(+)</name>
        <dbReference type="ChEBI" id="CHEBI:57540"/>
    </ligand>
</feature>
<feature type="binding site" evidence="1">
    <location>
        <position position="146"/>
    </location>
    <ligand>
        <name>NAD(+)</name>
        <dbReference type="ChEBI" id="CHEBI:57540"/>
    </ligand>
</feature>
<feature type="binding site" evidence="1">
    <location>
        <position position="174"/>
    </location>
    <ligand>
        <name>NAD(+)</name>
        <dbReference type="ChEBI" id="CHEBI:57540"/>
    </ligand>
</feature>
<feature type="binding site" evidence="1">
    <location>
        <begin position="205"/>
        <end position="207"/>
    </location>
    <ligand>
        <name>NAD(+)</name>
        <dbReference type="ChEBI" id="CHEBI:57540"/>
    </ligand>
</feature>
<feature type="binding site" evidence="1">
    <location>
        <position position="231"/>
    </location>
    <ligand>
        <name>NAD(+)</name>
        <dbReference type="ChEBI" id="CHEBI:57540"/>
    </ligand>
</feature>
<feature type="binding site" evidence="1">
    <location>
        <position position="256"/>
    </location>
    <ligand>
        <name>NAD(+)</name>
        <dbReference type="ChEBI" id="CHEBI:57540"/>
    </ligand>
</feature>
<feature type="binding site" evidence="1">
    <location>
        <position position="257"/>
    </location>
    <ligand>
        <name>substrate</name>
    </ligand>
</feature>
<name>PDXB_PSESM</name>
<keyword id="KW-0963">Cytoplasm</keyword>
<keyword id="KW-0520">NAD</keyword>
<keyword id="KW-0560">Oxidoreductase</keyword>
<keyword id="KW-0664">Pyridoxine biosynthesis</keyword>
<keyword id="KW-1185">Reference proteome</keyword>
<dbReference type="EC" id="1.1.1.290" evidence="1"/>
<dbReference type="EMBL" id="AE016853">
    <property type="protein sequence ID" value="AAO55537.1"/>
    <property type="molecule type" value="Genomic_DNA"/>
</dbReference>
<dbReference type="RefSeq" id="NP_791842.1">
    <property type="nucleotide sequence ID" value="NC_004578.1"/>
</dbReference>
<dbReference type="RefSeq" id="WP_005766914.1">
    <property type="nucleotide sequence ID" value="NC_004578.1"/>
</dbReference>
<dbReference type="SMR" id="Q884R9"/>
<dbReference type="STRING" id="223283.PSPTO_2019"/>
<dbReference type="GeneID" id="1183664"/>
<dbReference type="KEGG" id="pst:PSPTO_2019"/>
<dbReference type="PATRIC" id="fig|223283.9.peg.2050"/>
<dbReference type="eggNOG" id="COG0111">
    <property type="taxonomic scope" value="Bacteria"/>
</dbReference>
<dbReference type="HOGENOM" id="CLU_019796_4_0_6"/>
<dbReference type="OrthoDB" id="9770208at2"/>
<dbReference type="PhylomeDB" id="Q884R9"/>
<dbReference type="UniPathway" id="UPA00244">
    <property type="reaction ID" value="UER00310"/>
</dbReference>
<dbReference type="Proteomes" id="UP000002515">
    <property type="component" value="Chromosome"/>
</dbReference>
<dbReference type="GO" id="GO:0005737">
    <property type="term" value="C:cytoplasm"/>
    <property type="evidence" value="ECO:0007669"/>
    <property type="project" value="UniProtKB-SubCell"/>
</dbReference>
<dbReference type="GO" id="GO:0033711">
    <property type="term" value="F:4-phosphoerythronate dehydrogenase activity"/>
    <property type="evidence" value="ECO:0007669"/>
    <property type="project" value="UniProtKB-EC"/>
</dbReference>
<dbReference type="GO" id="GO:0051287">
    <property type="term" value="F:NAD binding"/>
    <property type="evidence" value="ECO:0007669"/>
    <property type="project" value="InterPro"/>
</dbReference>
<dbReference type="GO" id="GO:0046983">
    <property type="term" value="F:protein dimerization activity"/>
    <property type="evidence" value="ECO:0007669"/>
    <property type="project" value="InterPro"/>
</dbReference>
<dbReference type="GO" id="GO:0008615">
    <property type="term" value="P:pyridoxine biosynthetic process"/>
    <property type="evidence" value="ECO:0007669"/>
    <property type="project" value="UniProtKB-UniRule"/>
</dbReference>
<dbReference type="CDD" id="cd12158">
    <property type="entry name" value="ErythrP_dh"/>
    <property type="match status" value="1"/>
</dbReference>
<dbReference type="FunFam" id="3.40.50.720:FF:000093">
    <property type="entry name" value="Erythronate-4-phosphate dehydrogenase"/>
    <property type="match status" value="1"/>
</dbReference>
<dbReference type="Gene3D" id="3.30.1370.170">
    <property type="match status" value="1"/>
</dbReference>
<dbReference type="Gene3D" id="3.40.50.720">
    <property type="entry name" value="NAD(P)-binding Rossmann-like Domain"/>
    <property type="match status" value="2"/>
</dbReference>
<dbReference type="HAMAP" id="MF_01825">
    <property type="entry name" value="PdxB"/>
    <property type="match status" value="1"/>
</dbReference>
<dbReference type="InterPro" id="IPR050418">
    <property type="entry name" value="D-iso_2-hydroxyacid_DH_PdxB"/>
</dbReference>
<dbReference type="InterPro" id="IPR006139">
    <property type="entry name" value="D-isomer_2_OHA_DH_cat_dom"/>
</dbReference>
<dbReference type="InterPro" id="IPR029753">
    <property type="entry name" value="D-isomer_DH_CS"/>
</dbReference>
<dbReference type="InterPro" id="IPR006140">
    <property type="entry name" value="D-isomer_DH_NAD-bd"/>
</dbReference>
<dbReference type="InterPro" id="IPR020921">
    <property type="entry name" value="Erythronate-4-P_DHase"/>
</dbReference>
<dbReference type="InterPro" id="IPR024531">
    <property type="entry name" value="Erythronate-4-P_DHase_dimer"/>
</dbReference>
<dbReference type="InterPro" id="IPR036291">
    <property type="entry name" value="NAD(P)-bd_dom_sf"/>
</dbReference>
<dbReference type="InterPro" id="IPR038251">
    <property type="entry name" value="PdxB_dimer_sf"/>
</dbReference>
<dbReference type="NCBIfam" id="NF001309">
    <property type="entry name" value="PRK00257.1"/>
    <property type="match status" value="1"/>
</dbReference>
<dbReference type="PANTHER" id="PTHR43761:SF1">
    <property type="entry name" value="D-ISOMER SPECIFIC 2-HYDROXYACID DEHYDROGENASE CATALYTIC DOMAIN-CONTAINING PROTEIN-RELATED"/>
    <property type="match status" value="1"/>
</dbReference>
<dbReference type="PANTHER" id="PTHR43761">
    <property type="entry name" value="D-ISOMER SPECIFIC 2-HYDROXYACID DEHYDROGENASE FAMILY PROTEIN (AFU_ORTHOLOGUE AFUA_1G13630)"/>
    <property type="match status" value="1"/>
</dbReference>
<dbReference type="Pfam" id="PF00389">
    <property type="entry name" value="2-Hacid_dh"/>
    <property type="match status" value="1"/>
</dbReference>
<dbReference type="Pfam" id="PF02826">
    <property type="entry name" value="2-Hacid_dh_C"/>
    <property type="match status" value="1"/>
</dbReference>
<dbReference type="Pfam" id="PF11890">
    <property type="entry name" value="DUF3410"/>
    <property type="match status" value="1"/>
</dbReference>
<dbReference type="SUPFAM" id="SSF52283">
    <property type="entry name" value="Formate/glycerate dehydrogenase catalytic domain-like"/>
    <property type="match status" value="1"/>
</dbReference>
<dbReference type="SUPFAM" id="SSF51735">
    <property type="entry name" value="NAD(P)-binding Rossmann-fold domains"/>
    <property type="match status" value="1"/>
</dbReference>
<dbReference type="PROSITE" id="PS00671">
    <property type="entry name" value="D_2_HYDROXYACID_DH_3"/>
    <property type="match status" value="1"/>
</dbReference>